<dbReference type="EC" id="2.4.1.255" evidence="4"/>
<dbReference type="EMBL" id="AK037507">
    <property type="protein sequence ID" value="BAC29821.1"/>
    <property type="molecule type" value="mRNA"/>
</dbReference>
<dbReference type="EMBL" id="BC048939">
    <property type="protein sequence ID" value="AAH48939.1"/>
    <property type="molecule type" value="mRNA"/>
</dbReference>
<dbReference type="CCDS" id="CCDS20383.1"/>
<dbReference type="RefSeq" id="NP_780522.1">
    <property type="nucleotide sequence ID" value="NM_175313.5"/>
</dbReference>
<dbReference type="RefSeq" id="XP_006505321.1">
    <property type="nucleotide sequence ID" value="XM_006505258.3"/>
</dbReference>
<dbReference type="RefSeq" id="XP_036021604.1">
    <property type="nucleotide sequence ID" value="XM_036165711.1"/>
</dbReference>
<dbReference type="SMR" id="Q8BYW9"/>
<dbReference type="BioGRID" id="221637">
    <property type="interactions" value="2"/>
</dbReference>
<dbReference type="FunCoup" id="Q8BYW9">
    <property type="interactions" value="807"/>
</dbReference>
<dbReference type="IntAct" id="Q8BYW9">
    <property type="interactions" value="1"/>
</dbReference>
<dbReference type="MINT" id="Q8BYW9"/>
<dbReference type="STRING" id="10090.ENSMUSP00000061610"/>
<dbReference type="CAZy" id="GT61">
    <property type="family name" value="Glycosyltransferase Family 61"/>
</dbReference>
<dbReference type="GlyConnect" id="2279">
    <property type="glycosylation" value="2 N-Linked glycans (1 site)"/>
</dbReference>
<dbReference type="GlyCosmos" id="Q8BYW9">
    <property type="glycosylation" value="1 site, 2 glycans"/>
</dbReference>
<dbReference type="GlyGen" id="Q8BYW9">
    <property type="glycosylation" value="3 sites, 3 N-linked glycans (1 site)"/>
</dbReference>
<dbReference type="iPTMnet" id="Q8BYW9"/>
<dbReference type="PhosphoSitePlus" id="Q8BYW9"/>
<dbReference type="PaxDb" id="10090-ENSMUSP00000061610"/>
<dbReference type="PeptideAtlas" id="Q8BYW9"/>
<dbReference type="ProteomicsDB" id="277879"/>
<dbReference type="Pumba" id="Q8BYW9"/>
<dbReference type="Antibodypedia" id="15479">
    <property type="antibodies" value="48 antibodies from 18 providers"/>
</dbReference>
<dbReference type="Ensembl" id="ENSMUST00000054344.11">
    <property type="protein sequence ID" value="ENSMUSP00000061610.5"/>
    <property type="gene ID" value="ENSMUSG00000035245.13"/>
</dbReference>
<dbReference type="GeneID" id="101351"/>
<dbReference type="KEGG" id="mmu:101351"/>
<dbReference type="UCSC" id="uc009dai.1">
    <property type="organism name" value="mouse"/>
</dbReference>
<dbReference type="AGR" id="MGI:2141669"/>
<dbReference type="CTD" id="285203"/>
<dbReference type="MGI" id="MGI:2141669">
    <property type="gene designation" value="Eogt"/>
</dbReference>
<dbReference type="VEuPathDB" id="HostDB:ENSMUSG00000035245"/>
<dbReference type="eggNOG" id="KOG4698">
    <property type="taxonomic scope" value="Eukaryota"/>
</dbReference>
<dbReference type="GeneTree" id="ENSGT00940000156493"/>
<dbReference type="HOGENOM" id="CLU_039300_0_0_1"/>
<dbReference type="InParanoid" id="Q8BYW9"/>
<dbReference type="OMA" id="GHCELNR"/>
<dbReference type="OrthoDB" id="529273at2759"/>
<dbReference type="PhylomeDB" id="Q8BYW9"/>
<dbReference type="TreeFam" id="TF313716"/>
<dbReference type="BRENDA" id="2.4.1.255">
    <property type="organism ID" value="3474"/>
</dbReference>
<dbReference type="BioGRID-ORCS" id="101351">
    <property type="hits" value="1 hit in 79 CRISPR screens"/>
</dbReference>
<dbReference type="ChiTaRS" id="Eogt">
    <property type="organism name" value="mouse"/>
</dbReference>
<dbReference type="PRO" id="PR:Q8BYW9"/>
<dbReference type="Proteomes" id="UP000000589">
    <property type="component" value="Chromosome 6"/>
</dbReference>
<dbReference type="RNAct" id="Q8BYW9">
    <property type="molecule type" value="protein"/>
</dbReference>
<dbReference type="Bgee" id="ENSMUSG00000035245">
    <property type="expression patterns" value="Expressed in embryonic post-anal tail and 275 other cell types or tissues"/>
</dbReference>
<dbReference type="ExpressionAtlas" id="Q8BYW9">
    <property type="expression patterns" value="baseline and differential"/>
</dbReference>
<dbReference type="GO" id="GO:0005788">
    <property type="term" value="C:endoplasmic reticulum lumen"/>
    <property type="evidence" value="ECO:0007669"/>
    <property type="project" value="UniProtKB-SubCell"/>
</dbReference>
<dbReference type="GO" id="GO:0097363">
    <property type="term" value="F:protein O-acetylglucosaminyltransferase activity"/>
    <property type="evidence" value="ECO:0000314"/>
    <property type="project" value="UniProtKB"/>
</dbReference>
<dbReference type="GO" id="GO:0006493">
    <property type="term" value="P:protein O-linked glycosylation"/>
    <property type="evidence" value="ECO:0000314"/>
    <property type="project" value="UniProtKB"/>
</dbReference>
<dbReference type="InterPro" id="IPR049625">
    <property type="entry name" value="Glyco_transf_61_cat"/>
</dbReference>
<dbReference type="InterPro" id="IPR007657">
    <property type="entry name" value="Glycosyltransferase_61"/>
</dbReference>
<dbReference type="PANTHER" id="PTHR20961:SF148">
    <property type="entry name" value="EGF DOMAIN-SPECIFIC O-LINKED N-ACETYLGLUCOSAMINE TRANSFERASE"/>
    <property type="match status" value="1"/>
</dbReference>
<dbReference type="PANTHER" id="PTHR20961">
    <property type="entry name" value="GLYCOSYLTRANSFERASE"/>
    <property type="match status" value="1"/>
</dbReference>
<dbReference type="Pfam" id="PF04577">
    <property type="entry name" value="Glyco_transf_61"/>
    <property type="match status" value="1"/>
</dbReference>
<dbReference type="PROSITE" id="PS00014">
    <property type="entry name" value="ER_TARGET"/>
    <property type="match status" value="1"/>
</dbReference>
<protein>
    <recommendedName>
        <fullName>EGF domain-specific O-linked N-acetylglucosamine transferase</fullName>
        <ecNumber evidence="4">2.4.1.255</ecNumber>
    </recommendedName>
    <alternativeName>
        <fullName>Extracellular O-linked N-acetylglucosamine transferase</fullName>
    </alternativeName>
</protein>
<organism>
    <name type="scientific">Mus musculus</name>
    <name type="common">Mouse</name>
    <dbReference type="NCBI Taxonomy" id="10090"/>
    <lineage>
        <taxon>Eukaryota</taxon>
        <taxon>Metazoa</taxon>
        <taxon>Chordata</taxon>
        <taxon>Craniata</taxon>
        <taxon>Vertebrata</taxon>
        <taxon>Euteleostomi</taxon>
        <taxon>Mammalia</taxon>
        <taxon>Eutheria</taxon>
        <taxon>Euarchontoglires</taxon>
        <taxon>Glires</taxon>
        <taxon>Rodentia</taxon>
        <taxon>Myomorpha</taxon>
        <taxon>Muroidea</taxon>
        <taxon>Muridae</taxon>
        <taxon>Murinae</taxon>
        <taxon>Mus</taxon>
        <taxon>Mus</taxon>
    </lineage>
</organism>
<comment type="function">
    <text evidence="4">Catalyzes the transfer of a single N-acetylglucosamine from UDP-GlcNAc to a serine or threonine residue in extracellular proteins resulting in their modification with a beta-linked N-acetylglucosamine (O-GlcNAc). Specifically glycosylates the Thr residue located between the fifth and sixth conserved cysteines of folded EGF-like domains.</text>
</comment>
<comment type="catalytic activity">
    <reaction evidence="4">
        <text>L-seryl-[protein] + UDP-N-acetyl-alpha-D-glucosamine = 3-O-(N-acetyl-beta-D-glucosaminyl)-L-seryl-[protein] + UDP + H(+)</text>
        <dbReference type="Rhea" id="RHEA:48904"/>
        <dbReference type="Rhea" id="RHEA-COMP:9863"/>
        <dbReference type="Rhea" id="RHEA-COMP:12251"/>
        <dbReference type="ChEBI" id="CHEBI:15378"/>
        <dbReference type="ChEBI" id="CHEBI:29999"/>
        <dbReference type="ChEBI" id="CHEBI:57705"/>
        <dbReference type="ChEBI" id="CHEBI:58223"/>
        <dbReference type="ChEBI" id="CHEBI:90838"/>
        <dbReference type="EC" id="2.4.1.255"/>
    </reaction>
</comment>
<comment type="catalytic activity">
    <reaction evidence="4">
        <text>L-threonyl-[protein] + UDP-N-acetyl-alpha-D-glucosamine = 3-O-(N-acetyl-beta-D-glucosaminyl)-L-threonyl-[protein] + UDP + H(+)</text>
        <dbReference type="Rhea" id="RHEA:48908"/>
        <dbReference type="Rhea" id="RHEA-COMP:11060"/>
        <dbReference type="Rhea" id="RHEA-COMP:12252"/>
        <dbReference type="ChEBI" id="CHEBI:15378"/>
        <dbReference type="ChEBI" id="CHEBI:30013"/>
        <dbReference type="ChEBI" id="CHEBI:57705"/>
        <dbReference type="ChEBI" id="CHEBI:58223"/>
        <dbReference type="ChEBI" id="CHEBI:90840"/>
        <dbReference type="EC" id="2.4.1.255"/>
    </reaction>
</comment>
<comment type="subcellular location">
    <subcellularLocation>
        <location evidence="3">Endoplasmic reticulum lumen</location>
    </subcellularLocation>
</comment>
<comment type="tissue specificity">
    <text evidence="4">Widely expressed. Expressed in brain, heart, kidney, lung, skeletal muscles and thymus. Highest expression is observed in lung and the lowest in skeletal muscles.</text>
</comment>
<comment type="developmental stage">
    <text evidence="5">Expressed at embryonic day (E) 10.5 in the growing edge of the limb buds. At 11.5 dpc, enriched in the apical ectodermal ridge of the limbs. By 12.5 dpc, expression assumes a digit-condensation pattern in the 4 limbs.</text>
</comment>
<comment type="similarity">
    <text evidence="6">Belongs to the glycosyltransferase 61 family.</text>
</comment>
<gene>
    <name type="primary">Eogt</name>
    <name type="synonym">Aer61</name>
    <name type="synonym">Eogt1</name>
</gene>
<accession>Q8BYW9</accession>
<keyword id="KW-0256">Endoplasmic reticulum</keyword>
<keyword id="KW-0325">Glycoprotein</keyword>
<keyword id="KW-0328">Glycosyltransferase</keyword>
<keyword id="KW-1185">Reference proteome</keyword>
<keyword id="KW-0732">Signal</keyword>
<keyword id="KW-0808">Transferase</keyword>
<name>EOGT_MOUSE</name>
<reference key="1">
    <citation type="journal article" date="2005" name="Science">
        <title>The transcriptional landscape of the mammalian genome.</title>
        <authorList>
            <person name="Carninci P."/>
            <person name="Kasukawa T."/>
            <person name="Katayama S."/>
            <person name="Gough J."/>
            <person name="Frith M.C."/>
            <person name="Maeda N."/>
            <person name="Oyama R."/>
            <person name="Ravasi T."/>
            <person name="Lenhard B."/>
            <person name="Wells C."/>
            <person name="Kodzius R."/>
            <person name="Shimokawa K."/>
            <person name="Bajic V.B."/>
            <person name="Brenner S.E."/>
            <person name="Batalov S."/>
            <person name="Forrest A.R."/>
            <person name="Zavolan M."/>
            <person name="Davis M.J."/>
            <person name="Wilming L.G."/>
            <person name="Aidinis V."/>
            <person name="Allen J.E."/>
            <person name="Ambesi-Impiombato A."/>
            <person name="Apweiler R."/>
            <person name="Aturaliya R.N."/>
            <person name="Bailey T.L."/>
            <person name="Bansal M."/>
            <person name="Baxter L."/>
            <person name="Beisel K.W."/>
            <person name="Bersano T."/>
            <person name="Bono H."/>
            <person name="Chalk A.M."/>
            <person name="Chiu K.P."/>
            <person name="Choudhary V."/>
            <person name="Christoffels A."/>
            <person name="Clutterbuck D.R."/>
            <person name="Crowe M.L."/>
            <person name="Dalla E."/>
            <person name="Dalrymple B.P."/>
            <person name="de Bono B."/>
            <person name="Della Gatta G."/>
            <person name="di Bernardo D."/>
            <person name="Down T."/>
            <person name="Engstrom P."/>
            <person name="Fagiolini M."/>
            <person name="Faulkner G."/>
            <person name="Fletcher C.F."/>
            <person name="Fukushima T."/>
            <person name="Furuno M."/>
            <person name="Futaki S."/>
            <person name="Gariboldi M."/>
            <person name="Georgii-Hemming P."/>
            <person name="Gingeras T.R."/>
            <person name="Gojobori T."/>
            <person name="Green R.E."/>
            <person name="Gustincich S."/>
            <person name="Harbers M."/>
            <person name="Hayashi Y."/>
            <person name="Hensch T.K."/>
            <person name="Hirokawa N."/>
            <person name="Hill D."/>
            <person name="Huminiecki L."/>
            <person name="Iacono M."/>
            <person name="Ikeo K."/>
            <person name="Iwama A."/>
            <person name="Ishikawa T."/>
            <person name="Jakt M."/>
            <person name="Kanapin A."/>
            <person name="Katoh M."/>
            <person name="Kawasawa Y."/>
            <person name="Kelso J."/>
            <person name="Kitamura H."/>
            <person name="Kitano H."/>
            <person name="Kollias G."/>
            <person name="Krishnan S.P."/>
            <person name="Kruger A."/>
            <person name="Kummerfeld S.K."/>
            <person name="Kurochkin I.V."/>
            <person name="Lareau L.F."/>
            <person name="Lazarevic D."/>
            <person name="Lipovich L."/>
            <person name="Liu J."/>
            <person name="Liuni S."/>
            <person name="McWilliam S."/>
            <person name="Madan Babu M."/>
            <person name="Madera M."/>
            <person name="Marchionni L."/>
            <person name="Matsuda H."/>
            <person name="Matsuzawa S."/>
            <person name="Miki H."/>
            <person name="Mignone F."/>
            <person name="Miyake S."/>
            <person name="Morris K."/>
            <person name="Mottagui-Tabar S."/>
            <person name="Mulder N."/>
            <person name="Nakano N."/>
            <person name="Nakauchi H."/>
            <person name="Ng P."/>
            <person name="Nilsson R."/>
            <person name="Nishiguchi S."/>
            <person name="Nishikawa S."/>
            <person name="Nori F."/>
            <person name="Ohara O."/>
            <person name="Okazaki Y."/>
            <person name="Orlando V."/>
            <person name="Pang K.C."/>
            <person name="Pavan W.J."/>
            <person name="Pavesi G."/>
            <person name="Pesole G."/>
            <person name="Petrovsky N."/>
            <person name="Piazza S."/>
            <person name="Reed J."/>
            <person name="Reid J.F."/>
            <person name="Ring B.Z."/>
            <person name="Ringwald M."/>
            <person name="Rost B."/>
            <person name="Ruan Y."/>
            <person name="Salzberg S.L."/>
            <person name="Sandelin A."/>
            <person name="Schneider C."/>
            <person name="Schoenbach C."/>
            <person name="Sekiguchi K."/>
            <person name="Semple C.A."/>
            <person name="Seno S."/>
            <person name="Sessa L."/>
            <person name="Sheng Y."/>
            <person name="Shibata Y."/>
            <person name="Shimada H."/>
            <person name="Shimada K."/>
            <person name="Silva D."/>
            <person name="Sinclair B."/>
            <person name="Sperling S."/>
            <person name="Stupka E."/>
            <person name="Sugiura K."/>
            <person name="Sultana R."/>
            <person name="Takenaka Y."/>
            <person name="Taki K."/>
            <person name="Tammoja K."/>
            <person name="Tan S.L."/>
            <person name="Tang S."/>
            <person name="Taylor M.S."/>
            <person name="Tegner J."/>
            <person name="Teichmann S.A."/>
            <person name="Ueda H.R."/>
            <person name="van Nimwegen E."/>
            <person name="Verardo R."/>
            <person name="Wei C.L."/>
            <person name="Yagi K."/>
            <person name="Yamanishi H."/>
            <person name="Zabarovsky E."/>
            <person name="Zhu S."/>
            <person name="Zimmer A."/>
            <person name="Hide W."/>
            <person name="Bult C."/>
            <person name="Grimmond S.M."/>
            <person name="Teasdale R.D."/>
            <person name="Liu E.T."/>
            <person name="Brusic V."/>
            <person name="Quackenbush J."/>
            <person name="Wahlestedt C."/>
            <person name="Mattick J.S."/>
            <person name="Hume D.A."/>
            <person name="Kai C."/>
            <person name="Sasaki D."/>
            <person name="Tomaru Y."/>
            <person name="Fukuda S."/>
            <person name="Kanamori-Katayama M."/>
            <person name="Suzuki M."/>
            <person name="Aoki J."/>
            <person name="Arakawa T."/>
            <person name="Iida J."/>
            <person name="Imamura K."/>
            <person name="Itoh M."/>
            <person name="Kato T."/>
            <person name="Kawaji H."/>
            <person name="Kawagashira N."/>
            <person name="Kawashima T."/>
            <person name="Kojima M."/>
            <person name="Kondo S."/>
            <person name="Konno H."/>
            <person name="Nakano K."/>
            <person name="Ninomiya N."/>
            <person name="Nishio T."/>
            <person name="Okada M."/>
            <person name="Plessy C."/>
            <person name="Shibata K."/>
            <person name="Shiraki T."/>
            <person name="Suzuki S."/>
            <person name="Tagami M."/>
            <person name="Waki K."/>
            <person name="Watahiki A."/>
            <person name="Okamura-Oho Y."/>
            <person name="Suzuki H."/>
            <person name="Kawai J."/>
            <person name="Hayashizaki Y."/>
        </authorList>
    </citation>
    <scope>NUCLEOTIDE SEQUENCE [LARGE SCALE MRNA]</scope>
    <source>
        <strain>C57BL/6J</strain>
        <tissue>Thymus</tissue>
    </source>
</reference>
<reference key="2">
    <citation type="journal article" date="2004" name="Genome Res.">
        <title>The status, quality, and expansion of the NIH full-length cDNA project: the Mammalian Gene Collection (MGC).</title>
        <authorList>
            <consortium name="The MGC Project Team"/>
        </authorList>
    </citation>
    <scope>NUCLEOTIDE SEQUENCE [LARGE SCALE MRNA]</scope>
    <source>
        <strain>FVB/N-3</strain>
        <tissue>Mammary tumor</tissue>
    </source>
</reference>
<reference key="3">
    <citation type="journal article" date="2010" name="Cell">
        <title>A tissue-specific atlas of mouse protein phosphorylation and expression.</title>
        <authorList>
            <person name="Huttlin E.L."/>
            <person name="Jedrychowski M.P."/>
            <person name="Elias J.E."/>
            <person name="Goswami T."/>
            <person name="Rad R."/>
            <person name="Beausoleil S.A."/>
            <person name="Villen J."/>
            <person name="Haas W."/>
            <person name="Sowa M.E."/>
            <person name="Gygi S.P."/>
        </authorList>
    </citation>
    <scope>IDENTIFICATION BY MASS SPECTROMETRY [LARGE SCALE ANALYSIS]</scope>
    <source>
        <tissue>Lung</tissue>
    </source>
</reference>
<reference key="4">
    <citation type="journal article" date="2012" name="Biochem. Biophys. Res. Commun.">
        <title>O-linked-N-acetylglucosamine modification of mammalian Notch receptors by an atypical O-GlcNAc transferase Eogt1.</title>
        <authorList>
            <person name="Sakaidani Y."/>
            <person name="Ichiyanagi N."/>
            <person name="Saito C."/>
            <person name="Nomura T."/>
            <person name="Ito M."/>
            <person name="Nishio Y."/>
            <person name="Nadano D."/>
            <person name="Matsuda T."/>
            <person name="Furukawa K."/>
            <person name="Okajima T."/>
        </authorList>
    </citation>
    <scope>FUNCTION</scope>
    <scope>CATALYTIC ACTIVITY</scope>
    <scope>TISSUE SPECIFICITY</scope>
</reference>
<reference key="5">
    <citation type="journal article" date="2013" name="Am. J. Hum. Genet.">
        <title>Mutations in EOGT confirm the genetic heterogeneity of autosomal-recessive Adams-Oliver syndrome.</title>
        <authorList>
            <person name="Shaheen R."/>
            <person name="Aglan M."/>
            <person name="Keppler-Noreuil K."/>
            <person name="Faqeih E."/>
            <person name="Ansari S."/>
            <person name="Horton K."/>
            <person name="Ashour A."/>
            <person name="Zaki M.S."/>
            <person name="Al-Zahrani F."/>
            <person name="Cueto-Gonzalez A.M."/>
            <person name="Abdel-Salam G."/>
            <person name="Temtamy S."/>
            <person name="Alkuraya F.S."/>
        </authorList>
    </citation>
    <scope>DEVELOPMENTAL STAGE</scope>
</reference>
<sequence length="527" mass="61446">MLMLLVFGVLLHEVPLSGQDKAHSEADDAPGKALYDYSSLRLPAEHIPFFLHNNRHVASVCREDSHCPYKKHLENLNYCWGYEKSCAPEFRFGSPVCSYVDLGWTDTLESAQDMFWRQADFGYARERLGEIRTICQPERASDSSLVCSRYLQYCRATGLYLDLRNIKRNHDRFKEDFLQGGEIGGYCKLDSHALVSEGQRKSPLQSWFAELQGYTQLNFRPIEDAKCDIVVEKPTYFMKLDAGINMYHHFCDFLNLYLTQHVNNSFSTDVYIVMWDTSTYGYGDLFSDTWKAFTDYDVIHLKTYDSKKVCFKEAVFSLLPRMRYGLFYNTPLISGCQNTGLFRAFSQHVLHRLNITQEGPKDGKVRVTILARSTEYRKILNQDELVNALKTVSTFEVRVVDYKYRELGFLDQLRITHNTDIFIGMHGAGLTHLLFLPDWAAVFELYNCEDERCYLDLARLRGIHYITWRKPSKVFPQDKGHHPTLGEHPKFTNYSFDVEEFMYLVLQAAEHVLQHPQWPFKKKHDEL</sequence>
<proteinExistence type="evidence at protein level"/>
<evidence type="ECO:0000250" key="1"/>
<evidence type="ECO:0000255" key="2"/>
<evidence type="ECO:0000255" key="3">
    <source>
        <dbReference type="PROSITE-ProRule" id="PRU10138"/>
    </source>
</evidence>
<evidence type="ECO:0000269" key="4">
    <source>
    </source>
</evidence>
<evidence type="ECO:0000269" key="5">
    <source>
    </source>
</evidence>
<evidence type="ECO:0000305" key="6"/>
<feature type="signal peptide" evidence="2">
    <location>
        <begin position="1"/>
        <end position="19"/>
    </location>
</feature>
<feature type="chain" id="PRO_0000301972" description="EGF domain-specific O-linked N-acetylglucosamine transferase">
    <location>
        <begin position="20"/>
        <end position="527"/>
    </location>
</feature>
<feature type="short sequence motif" description="Required for optimal activity" evidence="1">
    <location>
        <begin position="295"/>
        <end position="297"/>
    </location>
</feature>
<feature type="short sequence motif" description="Prevents secretion from ER" evidence="3">
    <location>
        <begin position="524"/>
        <end position="527"/>
    </location>
</feature>
<feature type="glycosylation site" description="N-linked (GlcNAc...) asparagine" evidence="2">
    <location>
        <position position="354"/>
    </location>
</feature>